<dbReference type="EC" id="2.7.8.-" evidence="1"/>
<dbReference type="EMBL" id="AE015929">
    <property type="protein sequence ID" value="AAO04594.1"/>
    <property type="molecule type" value="Genomic_DNA"/>
</dbReference>
<dbReference type="RefSeq" id="NP_764552.1">
    <property type="nucleotide sequence ID" value="NC_004461.1"/>
</dbReference>
<dbReference type="SMR" id="Q8CPD8"/>
<dbReference type="DNASU" id="1057613"/>
<dbReference type="KEGG" id="sep:SE_0997"/>
<dbReference type="PATRIC" id="fig|176280.10.peg.972"/>
<dbReference type="eggNOG" id="COG1502">
    <property type="taxonomic scope" value="Bacteria"/>
</dbReference>
<dbReference type="HOGENOM" id="CLU_038053_1_1_9"/>
<dbReference type="OrthoDB" id="9762009at2"/>
<dbReference type="Proteomes" id="UP000001411">
    <property type="component" value="Chromosome"/>
</dbReference>
<dbReference type="GO" id="GO:0005886">
    <property type="term" value="C:plasma membrane"/>
    <property type="evidence" value="ECO:0007669"/>
    <property type="project" value="UniProtKB-SubCell"/>
</dbReference>
<dbReference type="GO" id="GO:0008808">
    <property type="term" value="F:cardiolipin synthase activity"/>
    <property type="evidence" value="ECO:0007669"/>
    <property type="project" value="InterPro"/>
</dbReference>
<dbReference type="GO" id="GO:0032049">
    <property type="term" value="P:cardiolipin biosynthetic process"/>
    <property type="evidence" value="ECO:0007669"/>
    <property type="project" value="InterPro"/>
</dbReference>
<dbReference type="CDD" id="cd09110">
    <property type="entry name" value="PLDc_CLS_1"/>
    <property type="match status" value="1"/>
</dbReference>
<dbReference type="CDD" id="cd09112">
    <property type="entry name" value="PLDc_CLS_2"/>
    <property type="match status" value="1"/>
</dbReference>
<dbReference type="FunFam" id="3.30.870.10:FF:000014">
    <property type="entry name" value="Cardiolipin synthase"/>
    <property type="match status" value="1"/>
</dbReference>
<dbReference type="Gene3D" id="3.30.870.10">
    <property type="entry name" value="Endonuclease Chain A"/>
    <property type="match status" value="2"/>
</dbReference>
<dbReference type="HAMAP" id="MF_01916">
    <property type="entry name" value="Cardiolipin_synth_Cls"/>
    <property type="match status" value="1"/>
</dbReference>
<dbReference type="InterPro" id="IPR030874">
    <property type="entry name" value="Cardiolipin_synth_Firmi"/>
</dbReference>
<dbReference type="InterPro" id="IPR022924">
    <property type="entry name" value="Cardiolipin_synthase"/>
</dbReference>
<dbReference type="InterPro" id="IPR027379">
    <property type="entry name" value="CLS_N"/>
</dbReference>
<dbReference type="InterPro" id="IPR025202">
    <property type="entry name" value="PLD-like_dom"/>
</dbReference>
<dbReference type="InterPro" id="IPR001736">
    <property type="entry name" value="PLipase_D/transphosphatidylase"/>
</dbReference>
<dbReference type="NCBIfam" id="TIGR04265">
    <property type="entry name" value="bac_cardiolipin"/>
    <property type="match status" value="1"/>
</dbReference>
<dbReference type="PANTHER" id="PTHR21248">
    <property type="entry name" value="CARDIOLIPIN SYNTHASE"/>
    <property type="match status" value="1"/>
</dbReference>
<dbReference type="PANTHER" id="PTHR21248:SF22">
    <property type="entry name" value="PHOSPHOLIPASE D"/>
    <property type="match status" value="1"/>
</dbReference>
<dbReference type="Pfam" id="PF13091">
    <property type="entry name" value="PLDc_2"/>
    <property type="match status" value="2"/>
</dbReference>
<dbReference type="Pfam" id="PF13396">
    <property type="entry name" value="PLDc_N"/>
    <property type="match status" value="1"/>
</dbReference>
<dbReference type="SMART" id="SM00155">
    <property type="entry name" value="PLDc"/>
    <property type="match status" value="2"/>
</dbReference>
<dbReference type="SUPFAM" id="SSF56024">
    <property type="entry name" value="Phospholipase D/nuclease"/>
    <property type="match status" value="2"/>
</dbReference>
<dbReference type="PROSITE" id="PS50035">
    <property type="entry name" value="PLD"/>
    <property type="match status" value="2"/>
</dbReference>
<keyword id="KW-1003">Cell membrane</keyword>
<keyword id="KW-0444">Lipid biosynthesis</keyword>
<keyword id="KW-0443">Lipid metabolism</keyword>
<keyword id="KW-0472">Membrane</keyword>
<keyword id="KW-0594">Phospholipid biosynthesis</keyword>
<keyword id="KW-1208">Phospholipid metabolism</keyword>
<keyword id="KW-0677">Repeat</keyword>
<keyword id="KW-0808">Transferase</keyword>
<keyword id="KW-0812">Transmembrane</keyword>
<keyword id="KW-1133">Transmembrane helix</keyword>
<accession>Q8CPD8</accession>
<feature type="chain" id="PRO_0000201275" description="Cardiolipin synthase 1">
    <location>
        <begin position="1"/>
        <end position="490"/>
    </location>
</feature>
<feature type="transmembrane region" description="Helical" evidence="1">
    <location>
        <begin position="9"/>
        <end position="29"/>
    </location>
</feature>
<feature type="transmembrane region" description="Helical" evidence="1">
    <location>
        <begin position="42"/>
        <end position="62"/>
    </location>
</feature>
<feature type="domain" description="PLD phosphodiesterase 1" evidence="1">
    <location>
        <begin position="225"/>
        <end position="252"/>
    </location>
</feature>
<feature type="domain" description="PLD phosphodiesterase 2" evidence="1">
    <location>
        <begin position="403"/>
        <end position="430"/>
    </location>
</feature>
<feature type="active site" evidence="1">
    <location>
        <position position="230"/>
    </location>
</feature>
<feature type="active site" evidence="1">
    <location>
        <position position="232"/>
    </location>
</feature>
<feature type="active site" evidence="1">
    <location>
        <position position="237"/>
    </location>
</feature>
<feature type="active site" evidence="1">
    <location>
        <position position="408"/>
    </location>
</feature>
<feature type="active site" evidence="1">
    <location>
        <position position="410"/>
    </location>
</feature>
<feature type="active site" evidence="1">
    <location>
        <position position="415"/>
    </location>
</feature>
<reference key="1">
    <citation type="journal article" date="2003" name="Mol. Microbiol.">
        <title>Genome-based analysis of virulence genes in a non-biofilm-forming Staphylococcus epidermidis strain (ATCC 12228).</title>
        <authorList>
            <person name="Zhang Y.-Q."/>
            <person name="Ren S.-X."/>
            <person name="Li H.-L."/>
            <person name="Wang Y.-X."/>
            <person name="Fu G."/>
            <person name="Yang J."/>
            <person name="Qin Z.-Q."/>
            <person name="Miao Y.-G."/>
            <person name="Wang W.-Y."/>
            <person name="Chen R.-S."/>
            <person name="Shen Y."/>
            <person name="Chen Z."/>
            <person name="Yuan Z.-H."/>
            <person name="Zhao G.-P."/>
            <person name="Qu D."/>
            <person name="Danchin A."/>
            <person name="Wen Y.-M."/>
        </authorList>
    </citation>
    <scope>NUCLEOTIDE SEQUENCE [LARGE SCALE GENOMIC DNA]</scope>
    <source>
        <strain>ATCC 12228 / FDA PCI 1200</strain>
    </source>
</reference>
<protein>
    <recommendedName>
        <fullName evidence="1">Cardiolipin synthase 1</fullName>
        <shortName evidence="1">CL synthase 1</shortName>
        <ecNumber evidence="1">2.7.8.-</ecNumber>
    </recommendedName>
</protein>
<comment type="function">
    <text evidence="1">Catalyzes the reversible phosphatidyl group transfer from one phosphatidylglycerol molecule to another to form cardiolipin (CL) (diphosphatidylglycerol) and glycerol.</text>
</comment>
<comment type="catalytic activity">
    <reaction evidence="1">
        <text>2 a 1,2-diacyl-sn-glycero-3-phospho-(1'-sn-glycerol) = a cardiolipin + glycerol</text>
        <dbReference type="Rhea" id="RHEA:31451"/>
        <dbReference type="ChEBI" id="CHEBI:17754"/>
        <dbReference type="ChEBI" id="CHEBI:62237"/>
        <dbReference type="ChEBI" id="CHEBI:64716"/>
    </reaction>
</comment>
<comment type="subcellular location">
    <subcellularLocation>
        <location evidence="1">Cell membrane</location>
        <topology evidence="1">Multi-pass membrane protein</topology>
    </subcellularLocation>
</comment>
<comment type="similarity">
    <text evidence="1">Belongs to the phospholipase D family. Cardiolipin synthase subfamily.</text>
</comment>
<organism>
    <name type="scientific">Staphylococcus epidermidis (strain ATCC 12228 / FDA PCI 1200)</name>
    <dbReference type="NCBI Taxonomy" id="176280"/>
    <lineage>
        <taxon>Bacteria</taxon>
        <taxon>Bacillati</taxon>
        <taxon>Bacillota</taxon>
        <taxon>Bacilli</taxon>
        <taxon>Bacillales</taxon>
        <taxon>Staphylococcaceae</taxon>
        <taxon>Staphylococcus</taxon>
    </lineage>
</organism>
<gene>
    <name type="primary">cls1</name>
    <name type="ordered locus">SE_0997</name>
</gene>
<sequence length="490" mass="56432">MNFGFLGTILTILLVVGFITNVVLAFVIIFLERDRRTASSTWAWLFVLFVLPVIGFILYLFLGRTVSKKKMEKNNGDELNAFEDLVQDQIDSFDKHNYGYINDQVIKHRDLIRMLLMKQDAFLTENNKIDLFTDGHKLYEKVLEDIYNAQDYIHLEYYTFELDGLGKRILDALETKLKEGLEVKLLYDDVGSKKVRLSKFKHFRALGGEVEAFFPSKVPLINFRMNNRNHRKIIIIDGQIGYVGGFNVGDDYLGLGKLGYWRDTHTRVQGEGIDALQLRFILDWNSQSHRPQFKFDQKYFPKKIGDKGNAAIQIASSGPAFDLHQIEYGYTKMIMSAKKSIYLQSPYFIPDQSYINALKMAANSGVEVNLMIPCKPDHPFVYWATFSNAADLLDSGVNIYTYQNGFIHSKILMIDDEISSIGSANMDFRSFELNFEVNAFIYDEDIAKQLRQAFEKDIEQSKLLTKEVYDKRPLSIKFKEGLAKLISPIL</sequence>
<evidence type="ECO:0000255" key="1">
    <source>
        <dbReference type="HAMAP-Rule" id="MF_01916"/>
    </source>
</evidence>
<name>CLS1_STAES</name>
<proteinExistence type="inferred from homology"/>